<protein>
    <recommendedName>
        <fullName evidence="1">Recombination protein RecR</fullName>
    </recommendedName>
</protein>
<name>RECR_RICAE</name>
<keyword id="KW-0227">DNA damage</keyword>
<keyword id="KW-0233">DNA recombination</keyword>
<keyword id="KW-0234">DNA repair</keyword>
<keyword id="KW-0479">Metal-binding</keyword>
<keyword id="KW-0862">Zinc</keyword>
<keyword id="KW-0863">Zinc-finger</keyword>
<reference key="1">
    <citation type="journal article" date="2009" name="BMC Genomics">
        <title>Analysis of the Rickettsia africae genome reveals that virulence acquisition in Rickettsia species may be explained by genome reduction.</title>
        <authorList>
            <person name="Fournier P.-E."/>
            <person name="El Karkouri K."/>
            <person name="Leroy Q."/>
            <person name="Robert C."/>
            <person name="Giumelli B."/>
            <person name="Renesto P."/>
            <person name="Socolovschi C."/>
            <person name="Parola P."/>
            <person name="Audic S."/>
            <person name="Raoult D."/>
        </authorList>
    </citation>
    <scope>NUCLEOTIDE SEQUENCE [LARGE SCALE GENOMIC DNA]</scope>
    <source>
        <strain>ESF-5</strain>
    </source>
</reference>
<feature type="chain" id="PRO_1000201869" description="Recombination protein RecR">
    <location>
        <begin position="1"/>
        <end position="201"/>
    </location>
</feature>
<feature type="domain" description="Toprim" evidence="1">
    <location>
        <begin position="82"/>
        <end position="177"/>
    </location>
</feature>
<feature type="zinc finger region" description="C4-type" evidence="1">
    <location>
        <begin position="59"/>
        <end position="74"/>
    </location>
</feature>
<evidence type="ECO:0000255" key="1">
    <source>
        <dbReference type="HAMAP-Rule" id="MF_00017"/>
    </source>
</evidence>
<proteinExistence type="inferred from homology"/>
<accession>C3PNG9</accession>
<organism>
    <name type="scientific">Rickettsia africae (strain ESF-5)</name>
    <dbReference type="NCBI Taxonomy" id="347255"/>
    <lineage>
        <taxon>Bacteria</taxon>
        <taxon>Pseudomonadati</taxon>
        <taxon>Pseudomonadota</taxon>
        <taxon>Alphaproteobacteria</taxon>
        <taxon>Rickettsiales</taxon>
        <taxon>Rickettsiaceae</taxon>
        <taxon>Rickettsieae</taxon>
        <taxon>Rickettsia</taxon>
        <taxon>spotted fever group</taxon>
    </lineage>
</organism>
<gene>
    <name evidence="1" type="primary">recR</name>
    <name type="ordered locus">RAF_ORF0570</name>
</gene>
<comment type="function">
    <text evidence="1">May play a role in DNA repair. It seems to be involved in an RecBC-independent recombinational process of DNA repair. It may act with RecF and RecO.</text>
</comment>
<comment type="similarity">
    <text evidence="1">Belongs to the RecR family.</text>
</comment>
<sequence length="201" mass="22609">MNETNDNDIDQLIYLFSKLPGLGIRSARRIALYLLQDKDVRLKSLINNLVEIDKKIVKCEICGNMDTENMCRICSSEYRDKSIIAIVETVAELWAMERSGNFKGLYHVLGHNLSAASRQNPSILRLPELLTRCFAENIKEVIIATNSTLEGQTTAYFITEYLKEHPAKISRLASGIPIGGELDYLDEGTVSAAINLRQPFE</sequence>
<dbReference type="EMBL" id="CP001612">
    <property type="protein sequence ID" value="ACP53479.1"/>
    <property type="molecule type" value="Genomic_DNA"/>
</dbReference>
<dbReference type="RefSeq" id="WP_004995735.1">
    <property type="nucleotide sequence ID" value="NC_012633.1"/>
</dbReference>
<dbReference type="SMR" id="C3PNG9"/>
<dbReference type="GeneID" id="95362228"/>
<dbReference type="KEGG" id="raf:RAF_ORF0570"/>
<dbReference type="HOGENOM" id="CLU_060739_1_1_5"/>
<dbReference type="Proteomes" id="UP000002305">
    <property type="component" value="Chromosome"/>
</dbReference>
<dbReference type="GO" id="GO:0003677">
    <property type="term" value="F:DNA binding"/>
    <property type="evidence" value="ECO:0007669"/>
    <property type="project" value="UniProtKB-UniRule"/>
</dbReference>
<dbReference type="GO" id="GO:0008270">
    <property type="term" value="F:zinc ion binding"/>
    <property type="evidence" value="ECO:0007669"/>
    <property type="project" value="UniProtKB-KW"/>
</dbReference>
<dbReference type="GO" id="GO:0006310">
    <property type="term" value="P:DNA recombination"/>
    <property type="evidence" value="ECO:0007669"/>
    <property type="project" value="UniProtKB-UniRule"/>
</dbReference>
<dbReference type="GO" id="GO:0006281">
    <property type="term" value="P:DNA repair"/>
    <property type="evidence" value="ECO:0007669"/>
    <property type="project" value="UniProtKB-UniRule"/>
</dbReference>
<dbReference type="CDD" id="cd01025">
    <property type="entry name" value="TOPRIM_recR"/>
    <property type="match status" value="1"/>
</dbReference>
<dbReference type="Gene3D" id="3.40.1360.10">
    <property type="match status" value="1"/>
</dbReference>
<dbReference type="Gene3D" id="1.10.8.420">
    <property type="entry name" value="RecR Domain 1"/>
    <property type="match status" value="1"/>
</dbReference>
<dbReference type="HAMAP" id="MF_00017">
    <property type="entry name" value="RecR"/>
    <property type="match status" value="1"/>
</dbReference>
<dbReference type="InterPro" id="IPR000093">
    <property type="entry name" value="DNA_Rcmb_RecR"/>
</dbReference>
<dbReference type="InterPro" id="IPR023627">
    <property type="entry name" value="Rcmb_RecR"/>
</dbReference>
<dbReference type="InterPro" id="IPR015967">
    <property type="entry name" value="Rcmb_RecR_Znf"/>
</dbReference>
<dbReference type="InterPro" id="IPR006171">
    <property type="entry name" value="TOPRIM_dom"/>
</dbReference>
<dbReference type="InterPro" id="IPR034137">
    <property type="entry name" value="TOPRIM_RecR"/>
</dbReference>
<dbReference type="NCBIfam" id="TIGR00615">
    <property type="entry name" value="recR"/>
    <property type="match status" value="1"/>
</dbReference>
<dbReference type="PANTHER" id="PTHR30446">
    <property type="entry name" value="RECOMBINATION PROTEIN RECR"/>
    <property type="match status" value="1"/>
</dbReference>
<dbReference type="PANTHER" id="PTHR30446:SF0">
    <property type="entry name" value="RECOMBINATION PROTEIN RECR"/>
    <property type="match status" value="1"/>
</dbReference>
<dbReference type="Pfam" id="PF21175">
    <property type="entry name" value="RecR_C"/>
    <property type="match status" value="1"/>
</dbReference>
<dbReference type="Pfam" id="PF21176">
    <property type="entry name" value="RecR_HhH"/>
    <property type="match status" value="1"/>
</dbReference>
<dbReference type="Pfam" id="PF02132">
    <property type="entry name" value="RecR_ZnF"/>
    <property type="match status" value="1"/>
</dbReference>
<dbReference type="Pfam" id="PF13662">
    <property type="entry name" value="Toprim_4"/>
    <property type="match status" value="1"/>
</dbReference>
<dbReference type="SMART" id="SM00493">
    <property type="entry name" value="TOPRIM"/>
    <property type="match status" value="1"/>
</dbReference>
<dbReference type="SUPFAM" id="SSF111304">
    <property type="entry name" value="Recombination protein RecR"/>
    <property type="match status" value="1"/>
</dbReference>
<dbReference type="PROSITE" id="PS01300">
    <property type="entry name" value="RECR"/>
    <property type="match status" value="1"/>
</dbReference>
<dbReference type="PROSITE" id="PS50880">
    <property type="entry name" value="TOPRIM"/>
    <property type="match status" value="1"/>
</dbReference>